<keyword id="KW-0056">Arginine metabolism</keyword>
<keyword id="KW-0963">Cytoplasm</keyword>
<keyword id="KW-0378">Hydrolase</keyword>
<keyword id="KW-1185">Reference proteome</keyword>
<comment type="catalytic activity">
    <reaction evidence="1">
        <text>L-arginine + H2O = L-citrulline + NH4(+)</text>
        <dbReference type="Rhea" id="RHEA:19597"/>
        <dbReference type="ChEBI" id="CHEBI:15377"/>
        <dbReference type="ChEBI" id="CHEBI:28938"/>
        <dbReference type="ChEBI" id="CHEBI:32682"/>
        <dbReference type="ChEBI" id="CHEBI:57743"/>
        <dbReference type="EC" id="3.5.3.6"/>
    </reaction>
</comment>
<comment type="pathway">
    <text evidence="1">Amino-acid degradation; L-arginine degradation via ADI pathway; carbamoyl phosphate from L-arginine: step 1/2.</text>
</comment>
<comment type="subcellular location">
    <subcellularLocation>
        <location evidence="1">Cytoplasm</location>
    </subcellularLocation>
</comment>
<comment type="similarity">
    <text evidence="1">Belongs to the arginine deiminase family.</text>
</comment>
<protein>
    <recommendedName>
        <fullName evidence="1">Arginine deiminase</fullName>
        <shortName evidence="1">ADI</shortName>
        <ecNumber evidence="1">3.5.3.6</ecNumber>
    </recommendedName>
    <alternativeName>
        <fullName evidence="1">Arginine dihydrolase</fullName>
        <shortName evidence="1">AD</shortName>
    </alternativeName>
</protein>
<reference key="1">
    <citation type="journal article" date="2005" name="Nucleic Acids Res.">
        <title>Genomic blueprint of Hahella chejuensis, a marine microbe producing an algicidal agent.</title>
        <authorList>
            <person name="Jeong H."/>
            <person name="Yim J.H."/>
            <person name="Lee C."/>
            <person name="Choi S.-H."/>
            <person name="Park Y.K."/>
            <person name="Yoon S.H."/>
            <person name="Hur C.-G."/>
            <person name="Kang H.-Y."/>
            <person name="Kim D."/>
            <person name="Lee H.H."/>
            <person name="Park K.H."/>
            <person name="Park S.-H."/>
            <person name="Park H.-S."/>
            <person name="Lee H.K."/>
            <person name="Oh T.K."/>
            <person name="Kim J.F."/>
        </authorList>
    </citation>
    <scope>NUCLEOTIDE SEQUENCE [LARGE SCALE GENOMIC DNA]</scope>
    <source>
        <strain>KCTC 2396</strain>
    </source>
</reference>
<proteinExistence type="inferred from homology"/>
<feature type="chain" id="PRO_0000336664" description="Arginine deiminase">
    <location>
        <begin position="1"/>
        <end position="416"/>
    </location>
</feature>
<feature type="active site" description="Amidino-cysteine intermediate" evidence="1">
    <location>
        <position position="406"/>
    </location>
</feature>
<organism>
    <name type="scientific">Hahella chejuensis (strain KCTC 2396)</name>
    <dbReference type="NCBI Taxonomy" id="349521"/>
    <lineage>
        <taxon>Bacteria</taxon>
        <taxon>Pseudomonadati</taxon>
        <taxon>Pseudomonadota</taxon>
        <taxon>Gammaproteobacteria</taxon>
        <taxon>Oceanospirillales</taxon>
        <taxon>Hahellaceae</taxon>
        <taxon>Hahella</taxon>
    </lineage>
</organism>
<evidence type="ECO:0000255" key="1">
    <source>
        <dbReference type="HAMAP-Rule" id="MF_00242"/>
    </source>
</evidence>
<sequence length="416" mass="45875">MTAATRLGVFSEVGKLRKVMVCRPGLAHLRLTPGNCEELLYDDVIWVQQAKRDHYDFISKMQDRGVEVVDMHDLLAQTMALPDARQWLLDRKITDENVGVGLADDVRAWMSELSAASLAELLLGGVVGGDLPEDFDSREMALFREFMGRSGFVIPPLPNSIFTRDTSCWIYGGVTLNPMFWPARRQETLLAASIYRFHLDFANADFEVWWGDPEKDHGAATLEGGDVMPVGNGVVLIGMGERTSRQAIALVAQSLFRHGAAERVIVAGLPKLRSAMHLDTVFTFCDRDLVTVFPEVVNRIDTFSIRPGDNGADGRLDIRPEKAPFVDVVGEALGLPRLRTVQTGGDSYEQEREQWDDGNNVVALEPGVVIAYDCNTYTNTLLRKAGVEVITITAGELGRGRGGGHCMTCPIIRDPV</sequence>
<name>ARCA_HAHCH</name>
<gene>
    <name evidence="1" type="primary">arcA</name>
    <name type="ordered locus">HCH_05490</name>
</gene>
<dbReference type="EC" id="3.5.3.6" evidence="1"/>
<dbReference type="EMBL" id="CP000155">
    <property type="protein sequence ID" value="ABC32153.1"/>
    <property type="molecule type" value="Genomic_DNA"/>
</dbReference>
<dbReference type="RefSeq" id="WP_011399216.1">
    <property type="nucleotide sequence ID" value="NC_007645.1"/>
</dbReference>
<dbReference type="SMR" id="Q2SB21"/>
<dbReference type="STRING" id="349521.HCH_05490"/>
<dbReference type="KEGG" id="hch:HCH_05490"/>
<dbReference type="eggNOG" id="COG2235">
    <property type="taxonomic scope" value="Bacteria"/>
</dbReference>
<dbReference type="HOGENOM" id="CLU_052662_0_0_6"/>
<dbReference type="OrthoDB" id="9807502at2"/>
<dbReference type="UniPathway" id="UPA00254">
    <property type="reaction ID" value="UER00364"/>
</dbReference>
<dbReference type="Proteomes" id="UP000000238">
    <property type="component" value="Chromosome"/>
</dbReference>
<dbReference type="GO" id="GO:0005737">
    <property type="term" value="C:cytoplasm"/>
    <property type="evidence" value="ECO:0007669"/>
    <property type="project" value="UniProtKB-SubCell"/>
</dbReference>
<dbReference type="GO" id="GO:0016990">
    <property type="term" value="F:arginine deiminase activity"/>
    <property type="evidence" value="ECO:0007669"/>
    <property type="project" value="UniProtKB-UniRule"/>
</dbReference>
<dbReference type="GO" id="GO:0019547">
    <property type="term" value="P:arginine catabolic process to ornithine"/>
    <property type="evidence" value="ECO:0007669"/>
    <property type="project" value="UniProtKB-UniRule"/>
</dbReference>
<dbReference type="GO" id="GO:0019546">
    <property type="term" value="P:arginine deiminase pathway"/>
    <property type="evidence" value="ECO:0007669"/>
    <property type="project" value="TreeGrafter"/>
</dbReference>
<dbReference type="Gene3D" id="1.10.3930.10">
    <property type="entry name" value="Arginine deiminase"/>
    <property type="match status" value="1"/>
</dbReference>
<dbReference type="Gene3D" id="3.75.10.10">
    <property type="entry name" value="L-arginine/glycine Amidinotransferase, Chain A"/>
    <property type="match status" value="1"/>
</dbReference>
<dbReference type="HAMAP" id="MF_00242">
    <property type="entry name" value="Arg_deiminase"/>
    <property type="match status" value="1"/>
</dbReference>
<dbReference type="InterPro" id="IPR003876">
    <property type="entry name" value="Arg_deiminase"/>
</dbReference>
<dbReference type="NCBIfam" id="TIGR01078">
    <property type="entry name" value="arcA"/>
    <property type="match status" value="1"/>
</dbReference>
<dbReference type="NCBIfam" id="NF002381">
    <property type="entry name" value="PRK01388.1"/>
    <property type="match status" value="1"/>
</dbReference>
<dbReference type="PANTHER" id="PTHR47271">
    <property type="entry name" value="ARGININE DEIMINASE"/>
    <property type="match status" value="1"/>
</dbReference>
<dbReference type="PANTHER" id="PTHR47271:SF3">
    <property type="entry name" value="ARGININE DEIMINASE"/>
    <property type="match status" value="1"/>
</dbReference>
<dbReference type="Pfam" id="PF02274">
    <property type="entry name" value="ADI"/>
    <property type="match status" value="1"/>
</dbReference>
<dbReference type="PIRSF" id="PIRSF006356">
    <property type="entry name" value="Arg_deiminase"/>
    <property type="match status" value="1"/>
</dbReference>
<dbReference type="PRINTS" id="PR01466">
    <property type="entry name" value="ARGDEIMINASE"/>
</dbReference>
<dbReference type="SUPFAM" id="SSF55909">
    <property type="entry name" value="Pentein"/>
    <property type="match status" value="1"/>
</dbReference>
<accession>Q2SB21</accession>